<feature type="chain" id="PRO_0000258055" description="Leucyl/phenylalanyl-tRNA--protein transferase">
    <location>
        <begin position="1"/>
        <end position="241"/>
    </location>
</feature>
<comment type="function">
    <text evidence="1">Functions in the N-end rule pathway of protein degradation where it conjugates Leu, Phe and, less efficiently, Met from aminoacyl-tRNAs to the N-termini of proteins containing an N-terminal arginine or lysine.</text>
</comment>
<comment type="catalytic activity">
    <reaction evidence="1">
        <text>N-terminal L-lysyl-[protein] + L-leucyl-tRNA(Leu) = N-terminal L-leucyl-L-lysyl-[protein] + tRNA(Leu) + H(+)</text>
        <dbReference type="Rhea" id="RHEA:12340"/>
        <dbReference type="Rhea" id="RHEA-COMP:9613"/>
        <dbReference type="Rhea" id="RHEA-COMP:9622"/>
        <dbReference type="Rhea" id="RHEA-COMP:12670"/>
        <dbReference type="Rhea" id="RHEA-COMP:12671"/>
        <dbReference type="ChEBI" id="CHEBI:15378"/>
        <dbReference type="ChEBI" id="CHEBI:65249"/>
        <dbReference type="ChEBI" id="CHEBI:78442"/>
        <dbReference type="ChEBI" id="CHEBI:78494"/>
        <dbReference type="ChEBI" id="CHEBI:133043"/>
        <dbReference type="EC" id="2.3.2.6"/>
    </reaction>
</comment>
<comment type="catalytic activity">
    <reaction evidence="1">
        <text>N-terminal L-arginyl-[protein] + L-leucyl-tRNA(Leu) = N-terminal L-leucyl-L-arginyl-[protein] + tRNA(Leu) + H(+)</text>
        <dbReference type="Rhea" id="RHEA:50416"/>
        <dbReference type="Rhea" id="RHEA-COMP:9613"/>
        <dbReference type="Rhea" id="RHEA-COMP:9622"/>
        <dbReference type="Rhea" id="RHEA-COMP:12672"/>
        <dbReference type="Rhea" id="RHEA-COMP:12673"/>
        <dbReference type="ChEBI" id="CHEBI:15378"/>
        <dbReference type="ChEBI" id="CHEBI:64719"/>
        <dbReference type="ChEBI" id="CHEBI:78442"/>
        <dbReference type="ChEBI" id="CHEBI:78494"/>
        <dbReference type="ChEBI" id="CHEBI:133044"/>
        <dbReference type="EC" id="2.3.2.6"/>
    </reaction>
</comment>
<comment type="catalytic activity">
    <reaction evidence="1">
        <text>L-phenylalanyl-tRNA(Phe) + an N-terminal L-alpha-aminoacyl-[protein] = an N-terminal L-phenylalanyl-L-alpha-aminoacyl-[protein] + tRNA(Phe)</text>
        <dbReference type="Rhea" id="RHEA:43632"/>
        <dbReference type="Rhea" id="RHEA-COMP:9668"/>
        <dbReference type="Rhea" id="RHEA-COMP:9699"/>
        <dbReference type="Rhea" id="RHEA-COMP:10636"/>
        <dbReference type="Rhea" id="RHEA-COMP:10637"/>
        <dbReference type="ChEBI" id="CHEBI:78442"/>
        <dbReference type="ChEBI" id="CHEBI:78531"/>
        <dbReference type="ChEBI" id="CHEBI:78597"/>
        <dbReference type="ChEBI" id="CHEBI:83561"/>
        <dbReference type="EC" id="2.3.2.6"/>
    </reaction>
</comment>
<comment type="subcellular location">
    <subcellularLocation>
        <location evidence="1">Cytoplasm</location>
    </subcellularLocation>
</comment>
<comment type="similarity">
    <text evidence="1">Belongs to the L/F-transferase family.</text>
</comment>
<proteinExistence type="inferred from homology"/>
<organism>
    <name type="scientific">Colwellia psychrerythraea (strain 34H / ATCC BAA-681)</name>
    <name type="common">Vibrio psychroerythus</name>
    <dbReference type="NCBI Taxonomy" id="167879"/>
    <lineage>
        <taxon>Bacteria</taxon>
        <taxon>Pseudomonadati</taxon>
        <taxon>Pseudomonadota</taxon>
        <taxon>Gammaproteobacteria</taxon>
        <taxon>Alteromonadales</taxon>
        <taxon>Colwelliaceae</taxon>
        <taxon>Colwellia</taxon>
    </lineage>
</organism>
<protein>
    <recommendedName>
        <fullName evidence="1">Leucyl/phenylalanyl-tRNA--protein transferase</fullName>
        <ecNumber evidence="1">2.3.2.6</ecNumber>
    </recommendedName>
    <alternativeName>
        <fullName evidence="1">L/F-transferase</fullName>
    </alternativeName>
    <alternativeName>
        <fullName evidence="1">Leucyltransferase</fullName>
    </alternativeName>
    <alternativeName>
        <fullName evidence="1">Phenyalanyltransferase</fullName>
    </alternativeName>
</protein>
<dbReference type="EC" id="2.3.2.6" evidence="1"/>
<dbReference type="EMBL" id="CP000083">
    <property type="protein sequence ID" value="AAZ26753.1"/>
    <property type="molecule type" value="Genomic_DNA"/>
</dbReference>
<dbReference type="SMR" id="Q480P4"/>
<dbReference type="STRING" id="167879.CPS_2763"/>
<dbReference type="KEGG" id="cps:CPS_2763"/>
<dbReference type="HOGENOM" id="CLU_075045_0_0_6"/>
<dbReference type="Proteomes" id="UP000000547">
    <property type="component" value="Chromosome"/>
</dbReference>
<dbReference type="GO" id="GO:0005737">
    <property type="term" value="C:cytoplasm"/>
    <property type="evidence" value="ECO:0007669"/>
    <property type="project" value="UniProtKB-SubCell"/>
</dbReference>
<dbReference type="GO" id="GO:0008914">
    <property type="term" value="F:leucyl-tRNA--protein transferase activity"/>
    <property type="evidence" value="ECO:0007669"/>
    <property type="project" value="UniProtKB-UniRule"/>
</dbReference>
<dbReference type="GO" id="GO:0030163">
    <property type="term" value="P:protein catabolic process"/>
    <property type="evidence" value="ECO:0007669"/>
    <property type="project" value="UniProtKB-UniRule"/>
</dbReference>
<dbReference type="FunFam" id="3.30.70.3550:FF:000001">
    <property type="entry name" value="Leucyl/phenylalanyl-tRNA--protein transferase"/>
    <property type="match status" value="1"/>
</dbReference>
<dbReference type="Gene3D" id="3.40.630.70">
    <property type="entry name" value="Leucyl/phenylalanyl-tRNA-protein transferase, C-terminal domain"/>
    <property type="match status" value="1"/>
</dbReference>
<dbReference type="Gene3D" id="3.30.70.3550">
    <property type="entry name" value="Leucyl/phenylalanyl-tRNA-protein transferase, N-terminal domain"/>
    <property type="match status" value="1"/>
</dbReference>
<dbReference type="HAMAP" id="MF_00688">
    <property type="entry name" value="Leu_Phe_trans"/>
    <property type="match status" value="1"/>
</dbReference>
<dbReference type="InterPro" id="IPR016181">
    <property type="entry name" value="Acyl_CoA_acyltransferase"/>
</dbReference>
<dbReference type="InterPro" id="IPR004616">
    <property type="entry name" value="Leu/Phe-tRNA_Trfase"/>
</dbReference>
<dbReference type="InterPro" id="IPR042203">
    <property type="entry name" value="Leu/Phe-tRNA_Trfase_C"/>
</dbReference>
<dbReference type="InterPro" id="IPR042221">
    <property type="entry name" value="Leu/Phe-tRNA_Trfase_N"/>
</dbReference>
<dbReference type="NCBIfam" id="TIGR00667">
    <property type="entry name" value="aat"/>
    <property type="match status" value="1"/>
</dbReference>
<dbReference type="PANTHER" id="PTHR30098">
    <property type="entry name" value="LEUCYL/PHENYLALANYL-TRNA--PROTEIN TRANSFERASE"/>
    <property type="match status" value="1"/>
</dbReference>
<dbReference type="PANTHER" id="PTHR30098:SF2">
    <property type="entry name" value="LEUCYL_PHENYLALANYL-TRNA--PROTEIN TRANSFERASE"/>
    <property type="match status" value="1"/>
</dbReference>
<dbReference type="Pfam" id="PF03588">
    <property type="entry name" value="Leu_Phe_trans"/>
    <property type="match status" value="1"/>
</dbReference>
<dbReference type="SUPFAM" id="SSF55729">
    <property type="entry name" value="Acyl-CoA N-acyltransferases (Nat)"/>
    <property type="match status" value="1"/>
</dbReference>
<accession>Q480P4</accession>
<evidence type="ECO:0000255" key="1">
    <source>
        <dbReference type="HAMAP-Rule" id="MF_00688"/>
    </source>
</evidence>
<sequence>MGQILYQLDDNSLTFPLIECALTEPNGLLALGGDLSPERLIAAYSQGIFPWYSDNDPLMWWSPNPRAIIDIDQLRINRTLRKAINKSPYQITLNQDFSQVTQLCANAPFRTDGTWILPEMEAAYLTLHQQGYAHSIEVWYTDEHDNKALVGGLYGVAVNGFFSGESMFYKQSNASKFALIALGQLLKSVDINFIDCQLLNPFLEDMGAKETSRDIFIHKQQHALTKTMPDDFWQPRTLTVI</sequence>
<keyword id="KW-0012">Acyltransferase</keyword>
<keyword id="KW-0963">Cytoplasm</keyword>
<keyword id="KW-0808">Transferase</keyword>
<name>LFTR_COLP3</name>
<gene>
    <name evidence="1" type="primary">aat</name>
    <name type="ordered locus">CPS_2763</name>
</gene>
<reference key="1">
    <citation type="journal article" date="2005" name="Proc. Natl. Acad. Sci. U.S.A.">
        <title>The psychrophilic lifestyle as revealed by the genome sequence of Colwellia psychrerythraea 34H through genomic and proteomic analyses.</title>
        <authorList>
            <person name="Methe B.A."/>
            <person name="Nelson K.E."/>
            <person name="Deming J.W."/>
            <person name="Momen B."/>
            <person name="Melamud E."/>
            <person name="Zhang X."/>
            <person name="Moult J."/>
            <person name="Madupu R."/>
            <person name="Nelson W.C."/>
            <person name="Dodson R.J."/>
            <person name="Brinkac L.M."/>
            <person name="Daugherty S.C."/>
            <person name="Durkin A.S."/>
            <person name="DeBoy R.T."/>
            <person name="Kolonay J.F."/>
            <person name="Sullivan S.A."/>
            <person name="Zhou L."/>
            <person name="Davidsen T.M."/>
            <person name="Wu M."/>
            <person name="Huston A.L."/>
            <person name="Lewis M."/>
            <person name="Weaver B."/>
            <person name="Weidman J.F."/>
            <person name="Khouri H."/>
            <person name="Utterback T.R."/>
            <person name="Feldblyum T.V."/>
            <person name="Fraser C.M."/>
        </authorList>
    </citation>
    <scope>NUCLEOTIDE SEQUENCE [LARGE SCALE GENOMIC DNA]</scope>
    <source>
        <strain>34H / ATCC BAA-681</strain>
    </source>
</reference>